<organismHost>
    <name type="scientific">Homo sapiens</name>
    <name type="common">Human</name>
    <dbReference type="NCBI Taxonomy" id="9606"/>
</organismHost>
<dbReference type="EMBL" id="X67161">
    <property type="protein sequence ID" value="CAA47634.1"/>
    <property type="molecule type" value="Genomic_DNA"/>
</dbReference>
<dbReference type="SMR" id="P54669"/>
<dbReference type="GO" id="GO:0042025">
    <property type="term" value="C:host cell nucleus"/>
    <property type="evidence" value="ECO:0007669"/>
    <property type="project" value="UniProtKB-SubCell"/>
</dbReference>
<dbReference type="GO" id="GO:0039620">
    <property type="term" value="C:T=7 icosahedral viral capsid"/>
    <property type="evidence" value="ECO:0007669"/>
    <property type="project" value="UniProtKB-UniRule"/>
</dbReference>
<dbReference type="GO" id="GO:0005198">
    <property type="term" value="F:structural molecule activity"/>
    <property type="evidence" value="ECO:0007669"/>
    <property type="project" value="UniProtKB-UniRule"/>
</dbReference>
<dbReference type="GO" id="GO:0075509">
    <property type="term" value="P:endocytosis involved in viral entry into host cell"/>
    <property type="evidence" value="ECO:0007669"/>
    <property type="project" value="UniProtKB-KW"/>
</dbReference>
<dbReference type="GO" id="GO:0019062">
    <property type="term" value="P:virion attachment to host cell"/>
    <property type="evidence" value="ECO:0007669"/>
    <property type="project" value="UniProtKB-UniRule"/>
</dbReference>
<dbReference type="Gene3D" id="2.60.175.20">
    <property type="entry name" value="Major capsid L1 (late) superfamily, Papillomavirus"/>
    <property type="match status" value="2"/>
</dbReference>
<dbReference type="HAMAP" id="MF_04002">
    <property type="entry name" value="PPV_L1"/>
    <property type="match status" value="1"/>
</dbReference>
<dbReference type="InterPro" id="IPR002210">
    <property type="entry name" value="Capsid_L1_Papillomavir"/>
</dbReference>
<dbReference type="InterPro" id="IPR036973">
    <property type="entry name" value="Capsid_L1_sf_Papillomavir"/>
</dbReference>
<dbReference type="InterPro" id="IPR011222">
    <property type="entry name" value="dsDNA_vir_gr_I_capsid"/>
</dbReference>
<dbReference type="Pfam" id="PF00500">
    <property type="entry name" value="Late_protein_L1"/>
    <property type="match status" value="1"/>
</dbReference>
<dbReference type="PRINTS" id="PR00865">
    <property type="entry name" value="HPVCAPSIDL1"/>
</dbReference>
<dbReference type="SUPFAM" id="SSF88648">
    <property type="entry name" value="Group I dsDNA viruses"/>
    <property type="match status" value="1"/>
</dbReference>
<organism>
    <name type="scientific">Human papillomavirus 68</name>
    <dbReference type="NCBI Taxonomy" id="45240"/>
    <lineage>
        <taxon>Viruses</taxon>
        <taxon>Monodnaviria</taxon>
        <taxon>Shotokuvirae</taxon>
        <taxon>Cossaviricota</taxon>
        <taxon>Papovaviricetes</taxon>
        <taxon>Zurhausenvirales</taxon>
        <taxon>Papillomaviridae</taxon>
        <taxon>Firstpapillomavirinae</taxon>
        <taxon>Alphapapillomavirus</taxon>
        <taxon>Alphapapillomavirus 7</taxon>
    </lineage>
</organism>
<proteinExistence type="inferred from homology"/>
<protein>
    <recommendedName>
        <fullName evidence="1">Major capsid protein L1</fullName>
    </recommendedName>
</protein>
<reference key="1">
    <citation type="journal article" date="1996" name="J. Clin. Microbiol.">
        <title>Two novel genital human papillomavirus (HPV) types, HPV68 and HPV70, related to the potentially oncogenic HPV39.</title>
        <authorList>
            <person name="Longuet M."/>
            <person name="Beaudenon S."/>
            <person name="Orth G."/>
        </authorList>
    </citation>
    <scope>NUCLEOTIDE SEQUENCE [GENOMIC DNA]</scope>
</reference>
<accession>P54669</accession>
<gene>
    <name evidence="1" type="primary">L1</name>
</gene>
<name>VL1_HPV68</name>
<sequence length="505" mass="56693">MALWRASDNMVYLPPPSVAKVVNTDDYVTRTGMYYYAGTSRLLTVGHPYFKVPMSGGRKQGIPKVSAYQYRVFRVTLPDPNKFSVPESTLYNPDTQRMVWACVGVEIGRGQPLGVGLSGHPLYNRLDDTENSPFSSNKNPKDSRDNVAVDCKQTQLCIIGCVPAIGEHWAKGKSCKPTNVQQGDCPPLELVNTPIEDGDMIDTGYGAMDFGTLQETKSEVPLDICQSVCKYPDYLQMSADVYGDSMFFCLRREQLFARHFWNRGGMVGDTIPTDMYIKGTDIRETPSSYVYAPSPSGSMVSSDSQLFNKPYWLHKAQGHNNGICWHNQLFLTVVDTTRSTNFTLSTTTDSTVPAVYDSNKFKEYVRHVEEYDLQFIFQLCTITLSTDVMSYIHTMNPAILDDWNFGVAPPPSASLVDTYRYLQSAAITCQKDAPAPVKKDPYDGLNFWNVDLKEKFSSELDQFPLGRKFLLQAGVRRRPTIGPRKRTATATTTSTSKHKRKRVSK</sequence>
<keyword id="KW-0167">Capsid protein</keyword>
<keyword id="KW-1015">Disulfide bond</keyword>
<keyword id="KW-1048">Host nucleus</keyword>
<keyword id="KW-0945">Host-virus interaction</keyword>
<keyword id="KW-0426">Late protein</keyword>
<keyword id="KW-1145">T=7 icosahedral capsid protein</keyword>
<keyword id="KW-1161">Viral attachment to host cell</keyword>
<keyword id="KW-1162">Viral penetration into host cytoplasm</keyword>
<keyword id="KW-0946">Virion</keyword>
<keyword id="KW-1164">Virus endocytosis by host</keyword>
<keyword id="KW-1160">Virus entry into host cell</keyword>
<evidence type="ECO:0000255" key="1">
    <source>
        <dbReference type="HAMAP-Rule" id="MF_04002"/>
    </source>
</evidence>
<evidence type="ECO:0000256" key="2">
    <source>
        <dbReference type="SAM" id="MobiDB-lite"/>
    </source>
</evidence>
<feature type="chain" id="PRO_0000133550" description="Major capsid protein L1">
    <location>
        <begin position="1"/>
        <end position="505"/>
    </location>
</feature>
<feature type="region of interest" description="Disordered" evidence="2">
    <location>
        <begin position="126"/>
        <end position="145"/>
    </location>
</feature>
<feature type="region of interest" description="Disordered" evidence="2">
    <location>
        <begin position="480"/>
        <end position="505"/>
    </location>
</feature>
<feature type="compositionally biased region" description="Basic residues" evidence="2">
    <location>
        <begin position="496"/>
        <end position="505"/>
    </location>
</feature>
<feature type="disulfide bond" description="Interchain (with C-429)" evidence="1">
    <location>
        <position position="175"/>
    </location>
</feature>
<feature type="disulfide bond" description="Interchain (with C-175)" evidence="1">
    <location>
        <position position="429"/>
    </location>
</feature>
<comment type="function">
    <text evidence="1">Forms an icosahedral capsid with a T=7 symmetry and a 50 nm diameter. The capsid is composed of 72 pentamers linked to each other by disulfide bonds and associated with L2 proteins. Binds to heparan sulfate proteoglycans on cell surface of basal layer keratinocytes to provide initial virion attachment. This binding mediates a conformational change in the virus capsid that facilitates efficient infection. The virion enters the host cell via endocytosis. During virus trafficking, L1 protein dissociates from the viral DNA and the genomic DNA is released to the host nucleus. The virion assembly takes place within the cell nucleus. Encapsulates the genomic DNA together with protein L2.</text>
</comment>
<comment type="subunit">
    <text evidence="1">Self-assembles into homopentamers. The capsid has an icosahedral symmetry and consists of 72 capsomers, with each capsomer being a pentamer of L1. Interacts with the minor capsid protein L2; this interaction is necessary for viral genome encapsidation. Interacts with protein E2; this interaction enhances E2-dependent replication and transcription activation.</text>
</comment>
<comment type="subcellular location">
    <subcellularLocation>
        <location evidence="1">Virion</location>
    </subcellularLocation>
    <subcellularLocation>
        <location evidence="1">Host nucleus</location>
    </subcellularLocation>
</comment>
<comment type="similarity">
    <text evidence="1">Belongs to the papillomaviridae L1 protein family.</text>
</comment>